<feature type="signal peptide" evidence="1">
    <location>
        <begin position="1"/>
        <end position="19"/>
    </location>
</feature>
<feature type="chain" id="PRO_0000029298" description="Foldase protein PrsA">
    <location>
        <begin position="20"/>
        <end position="333"/>
    </location>
</feature>
<feature type="domain" description="PpiC" evidence="1">
    <location>
        <begin position="155"/>
        <end position="245"/>
    </location>
</feature>
<feature type="region of interest" description="Disordered" evidence="2">
    <location>
        <begin position="291"/>
        <end position="333"/>
    </location>
</feature>
<feature type="compositionally biased region" description="Acidic residues" evidence="2">
    <location>
        <begin position="303"/>
        <end position="333"/>
    </location>
</feature>
<feature type="lipid moiety-binding region" description="N-palmitoyl cysteine" evidence="1">
    <location>
        <position position="20"/>
    </location>
</feature>
<feature type="lipid moiety-binding region" description="S-diacylglycerol cysteine" evidence="1">
    <location>
        <position position="20"/>
    </location>
</feature>
<dbReference type="EC" id="5.2.1.8" evidence="1"/>
<dbReference type="EMBL" id="BA000004">
    <property type="protein sequence ID" value="BAB04896.1"/>
    <property type="molecule type" value="Genomic_DNA"/>
</dbReference>
<dbReference type="PIR" id="A83797">
    <property type="entry name" value="A83797"/>
</dbReference>
<dbReference type="RefSeq" id="WP_010897347.1">
    <property type="nucleotide sequence ID" value="NC_002570.2"/>
</dbReference>
<dbReference type="SMR" id="Q9KDN4"/>
<dbReference type="STRING" id="272558.gene:10727071"/>
<dbReference type="KEGG" id="bha:BH1177"/>
<dbReference type="eggNOG" id="COG0760">
    <property type="taxonomic scope" value="Bacteria"/>
</dbReference>
<dbReference type="HOGENOM" id="CLU_034646_6_1_9"/>
<dbReference type="OrthoDB" id="14196at2"/>
<dbReference type="Proteomes" id="UP000001258">
    <property type="component" value="Chromosome"/>
</dbReference>
<dbReference type="GO" id="GO:0005886">
    <property type="term" value="C:plasma membrane"/>
    <property type="evidence" value="ECO:0007669"/>
    <property type="project" value="UniProtKB-SubCell"/>
</dbReference>
<dbReference type="GO" id="GO:0003755">
    <property type="term" value="F:peptidyl-prolyl cis-trans isomerase activity"/>
    <property type="evidence" value="ECO:0007669"/>
    <property type="project" value="UniProtKB-UniRule"/>
</dbReference>
<dbReference type="GO" id="GO:0006457">
    <property type="term" value="P:protein folding"/>
    <property type="evidence" value="ECO:0007669"/>
    <property type="project" value="UniProtKB-UniRule"/>
</dbReference>
<dbReference type="Gene3D" id="3.10.50.40">
    <property type="match status" value="1"/>
</dbReference>
<dbReference type="HAMAP" id="MF_01145">
    <property type="entry name" value="Foldase_PrsA"/>
    <property type="match status" value="1"/>
</dbReference>
<dbReference type="InterPro" id="IPR023059">
    <property type="entry name" value="Foldase_PrsA"/>
</dbReference>
<dbReference type="InterPro" id="IPR046357">
    <property type="entry name" value="PPIase_dom_sf"/>
</dbReference>
<dbReference type="InterPro" id="IPR000297">
    <property type="entry name" value="PPIase_PpiC"/>
</dbReference>
<dbReference type="InterPro" id="IPR050245">
    <property type="entry name" value="PrsA_foldase"/>
</dbReference>
<dbReference type="InterPro" id="IPR027304">
    <property type="entry name" value="Trigger_fact/SurA_dom_sf"/>
</dbReference>
<dbReference type="PANTHER" id="PTHR47245:SF1">
    <property type="entry name" value="FOLDASE PROTEIN PRSA"/>
    <property type="match status" value="1"/>
</dbReference>
<dbReference type="PANTHER" id="PTHR47245">
    <property type="entry name" value="PEPTIDYLPROLYL ISOMERASE"/>
    <property type="match status" value="1"/>
</dbReference>
<dbReference type="Pfam" id="PF13616">
    <property type="entry name" value="Rotamase_3"/>
    <property type="match status" value="1"/>
</dbReference>
<dbReference type="SUPFAM" id="SSF54534">
    <property type="entry name" value="FKBP-like"/>
    <property type="match status" value="1"/>
</dbReference>
<dbReference type="SUPFAM" id="SSF109998">
    <property type="entry name" value="Triger factor/SurA peptide-binding domain-like"/>
    <property type="match status" value="1"/>
</dbReference>
<dbReference type="PROSITE" id="PS50198">
    <property type="entry name" value="PPIC_PPIASE_2"/>
    <property type="match status" value="1"/>
</dbReference>
<dbReference type="PROSITE" id="PS51257">
    <property type="entry name" value="PROKAR_LIPOPROTEIN"/>
    <property type="match status" value="1"/>
</dbReference>
<comment type="function">
    <text evidence="1">Plays a major role in protein secretion by helping the post-translocational extracellular folding of several secreted proteins.</text>
</comment>
<comment type="catalytic activity">
    <reaction evidence="1">
        <text>[protein]-peptidylproline (omega=180) = [protein]-peptidylproline (omega=0)</text>
        <dbReference type="Rhea" id="RHEA:16237"/>
        <dbReference type="Rhea" id="RHEA-COMP:10747"/>
        <dbReference type="Rhea" id="RHEA-COMP:10748"/>
        <dbReference type="ChEBI" id="CHEBI:83833"/>
        <dbReference type="ChEBI" id="CHEBI:83834"/>
        <dbReference type="EC" id="5.2.1.8"/>
    </reaction>
</comment>
<comment type="subcellular location">
    <subcellularLocation>
        <location evidence="1">Cell membrane</location>
        <topology evidence="1">Lipid-anchor</topology>
    </subcellularLocation>
</comment>
<comment type="similarity">
    <text evidence="1">Belongs to the PrsA family.</text>
</comment>
<reference key="1">
    <citation type="journal article" date="2000" name="Nucleic Acids Res.">
        <title>Complete genome sequence of the alkaliphilic bacterium Bacillus halodurans and genomic sequence comparison with Bacillus subtilis.</title>
        <authorList>
            <person name="Takami H."/>
            <person name="Nakasone K."/>
            <person name="Takaki Y."/>
            <person name="Maeno G."/>
            <person name="Sasaki R."/>
            <person name="Masui N."/>
            <person name="Fuji F."/>
            <person name="Hirama C."/>
            <person name="Nakamura Y."/>
            <person name="Ogasawara N."/>
            <person name="Kuhara S."/>
            <person name="Horikoshi K."/>
        </authorList>
    </citation>
    <scope>NUCLEOTIDE SEQUENCE [LARGE SCALE GENOMIC DNA]</scope>
    <source>
        <strain>ATCC BAA-125 / DSM 18197 / FERM 7344 / JCM 9153 / C-125</strain>
    </source>
</reference>
<protein>
    <recommendedName>
        <fullName evidence="1">Foldase protein PrsA</fullName>
        <ecNumber evidence="1">5.2.1.8</ecNumber>
    </recommendedName>
</protein>
<evidence type="ECO:0000255" key="1">
    <source>
        <dbReference type="HAMAP-Rule" id="MF_01145"/>
    </source>
</evidence>
<evidence type="ECO:0000256" key="2">
    <source>
        <dbReference type="SAM" id="MobiDB-lite"/>
    </source>
</evidence>
<gene>
    <name evidence="1" type="primary">prsA</name>
    <name type="ordered locus">BH1177</name>
</gene>
<keyword id="KW-1003">Cell membrane</keyword>
<keyword id="KW-0413">Isomerase</keyword>
<keyword id="KW-0449">Lipoprotein</keyword>
<keyword id="KW-0472">Membrane</keyword>
<keyword id="KW-0564">Palmitate</keyword>
<keyword id="KW-1185">Reference proteome</keyword>
<keyword id="KW-0697">Rotamase</keyword>
<keyword id="KW-0732">Signal</keyword>
<sequence>MKKRHLLIAGLACMTILGACNNDDAGSSGQAVVEVDGHEISDAEFVDMLKERYGEAILQELVQRHLISQAADSVEIPQEEIDEELETFKSQIGVETDDEMLDALSNQFGITVENKEEFVNEYILPPLVLEKLAVEGVEITDEEKQAYFDENRDSLIEVEASHILVEDEETAEEVLDRLEAGDDFAELASEYSVDPSAEANNGDLGFFGKGDMVPEFEEAAFNMEIDEVSEPVESTYGYHIILVTDRKDSYEELEEKIHDTLMRERSRTQEEVLRDLLAQADINVLDDQFEGLFDLPDAPPVEDTPEIDGEDASDEAEDQAEDADENAEEEDES</sequence>
<accession>Q9KDN4</accession>
<proteinExistence type="inferred from homology"/>
<organism>
    <name type="scientific">Halalkalibacterium halodurans (strain ATCC BAA-125 / DSM 18197 / FERM 7344 / JCM 9153 / C-125)</name>
    <name type="common">Bacillus halodurans</name>
    <dbReference type="NCBI Taxonomy" id="272558"/>
    <lineage>
        <taxon>Bacteria</taxon>
        <taxon>Bacillati</taxon>
        <taxon>Bacillota</taxon>
        <taxon>Bacilli</taxon>
        <taxon>Bacillales</taxon>
        <taxon>Bacillaceae</taxon>
        <taxon>Halalkalibacterium (ex Joshi et al. 2022)</taxon>
    </lineage>
</organism>
<name>PRSA_HALH5</name>